<comment type="function">
    <text evidence="2">Apoprotein for the two 4Fe-4S centers FA and FB of photosystem I (PSI); essential for photochemical activity. FB is the terminal electron acceptor of PSI, donating electrons to ferredoxin. The C-terminus interacts with PsaA/B/D and helps assemble the protein into the PSI complex. Required for binding of PsaD and PsaE to PSI. PSI is a plastocyanin/cytochrome c6-ferredoxin oxidoreductase, converting photonic excitation into a charge separation, which transfers an electron from the donor P700 chlorophyll pair to the spectroscopically characterized acceptors A0, A1, FX, FA and FB in turn.</text>
</comment>
<comment type="catalytic activity">
    <reaction evidence="2">
        <text>reduced [plastocyanin] + hnu + oxidized [2Fe-2S]-[ferredoxin] = oxidized [plastocyanin] + reduced [2Fe-2S]-[ferredoxin]</text>
        <dbReference type="Rhea" id="RHEA:30407"/>
        <dbReference type="Rhea" id="RHEA-COMP:10000"/>
        <dbReference type="Rhea" id="RHEA-COMP:10001"/>
        <dbReference type="Rhea" id="RHEA-COMP:10039"/>
        <dbReference type="Rhea" id="RHEA-COMP:10040"/>
        <dbReference type="ChEBI" id="CHEBI:29036"/>
        <dbReference type="ChEBI" id="CHEBI:30212"/>
        <dbReference type="ChEBI" id="CHEBI:33737"/>
        <dbReference type="ChEBI" id="CHEBI:33738"/>
        <dbReference type="ChEBI" id="CHEBI:49552"/>
        <dbReference type="EC" id="1.97.1.12"/>
    </reaction>
</comment>
<comment type="cofactor">
    <cofactor evidence="2">
        <name>[4Fe-4S] cluster</name>
        <dbReference type="ChEBI" id="CHEBI:49883"/>
    </cofactor>
    <text evidence="2">Binds 2 [4Fe-4S] clusters. Cluster 2 is most probably the spectroscopically characterized electron acceptor FA and cluster 1 is most probably FB.</text>
</comment>
<comment type="subunit">
    <text evidence="2">The cyanobacterial PSI reaction center is composed of one copy each of PsaA,B,C,D,E,F,I,J,K,L,M and X, and forms trimeric complexes.</text>
</comment>
<comment type="subcellular location">
    <subcellularLocation>
        <location evidence="2">Cellular thylakoid membrane</location>
        <topology evidence="2">Peripheral membrane protein</topology>
        <orientation evidence="2">Cytoplasmic side</orientation>
    </subcellularLocation>
</comment>
<proteinExistence type="inferred from homology"/>
<organism>
    <name type="scientific">Nostoc sp. (strain PCC 8009)</name>
    <dbReference type="NCBI Taxonomy" id="29413"/>
    <lineage>
        <taxon>Bacteria</taxon>
        <taxon>Bacillati</taxon>
        <taxon>Cyanobacteriota</taxon>
        <taxon>Cyanophyceae</taxon>
        <taxon>Nostocales</taxon>
        <taxon>Nostocaceae</taxon>
        <taxon>Nostoc</taxon>
    </lineage>
</organism>
<dbReference type="EC" id="1.97.1.12" evidence="2"/>
<dbReference type="EMBL" id="AF148517">
    <property type="protein sequence ID" value="AAD38029.1"/>
    <property type="molecule type" value="Genomic_DNA"/>
</dbReference>
<dbReference type="SMR" id="P0A413"/>
<dbReference type="GO" id="GO:0009522">
    <property type="term" value="C:photosystem I"/>
    <property type="evidence" value="ECO:0007669"/>
    <property type="project" value="UniProtKB-KW"/>
</dbReference>
<dbReference type="GO" id="GO:0031676">
    <property type="term" value="C:plasma membrane-derived thylakoid membrane"/>
    <property type="evidence" value="ECO:0007669"/>
    <property type="project" value="UniProtKB-SubCell"/>
</dbReference>
<dbReference type="GO" id="GO:0051539">
    <property type="term" value="F:4 iron, 4 sulfur cluster binding"/>
    <property type="evidence" value="ECO:0007669"/>
    <property type="project" value="UniProtKB-KW"/>
</dbReference>
<dbReference type="GO" id="GO:0009055">
    <property type="term" value="F:electron transfer activity"/>
    <property type="evidence" value="ECO:0007669"/>
    <property type="project" value="UniProtKB-UniRule"/>
</dbReference>
<dbReference type="GO" id="GO:0046872">
    <property type="term" value="F:metal ion binding"/>
    <property type="evidence" value="ECO:0007669"/>
    <property type="project" value="UniProtKB-KW"/>
</dbReference>
<dbReference type="GO" id="GO:0016491">
    <property type="term" value="F:oxidoreductase activity"/>
    <property type="evidence" value="ECO:0007669"/>
    <property type="project" value="UniProtKB-KW"/>
</dbReference>
<dbReference type="GO" id="GO:0009773">
    <property type="term" value="P:photosynthetic electron transport in photosystem I"/>
    <property type="evidence" value="ECO:0007669"/>
    <property type="project" value="InterPro"/>
</dbReference>
<dbReference type="FunFam" id="3.30.70.20:FF:000001">
    <property type="entry name" value="Photosystem I iron-sulfur center"/>
    <property type="match status" value="1"/>
</dbReference>
<dbReference type="Gene3D" id="3.30.70.20">
    <property type="match status" value="1"/>
</dbReference>
<dbReference type="HAMAP" id="MF_01303">
    <property type="entry name" value="PSI_PsaC"/>
    <property type="match status" value="1"/>
</dbReference>
<dbReference type="InterPro" id="IPR017896">
    <property type="entry name" value="4Fe4S_Fe-S-bd"/>
</dbReference>
<dbReference type="InterPro" id="IPR017900">
    <property type="entry name" value="4Fe4S_Fe_S_CS"/>
</dbReference>
<dbReference type="InterPro" id="IPR050157">
    <property type="entry name" value="PSI_iron-sulfur_center"/>
</dbReference>
<dbReference type="InterPro" id="IPR017491">
    <property type="entry name" value="PSI_PsaC"/>
</dbReference>
<dbReference type="NCBIfam" id="TIGR03048">
    <property type="entry name" value="PS_I_psaC"/>
    <property type="match status" value="1"/>
</dbReference>
<dbReference type="PANTHER" id="PTHR24960:SF79">
    <property type="entry name" value="PHOTOSYSTEM I IRON-SULFUR CENTER"/>
    <property type="match status" value="1"/>
</dbReference>
<dbReference type="PANTHER" id="PTHR24960">
    <property type="entry name" value="PHOTOSYSTEM I IRON-SULFUR CENTER-RELATED"/>
    <property type="match status" value="1"/>
</dbReference>
<dbReference type="Pfam" id="PF12838">
    <property type="entry name" value="Fer4_7"/>
    <property type="match status" value="1"/>
</dbReference>
<dbReference type="SUPFAM" id="SSF54862">
    <property type="entry name" value="4Fe-4S ferredoxins"/>
    <property type="match status" value="1"/>
</dbReference>
<dbReference type="PROSITE" id="PS00198">
    <property type="entry name" value="4FE4S_FER_1"/>
    <property type="match status" value="2"/>
</dbReference>
<dbReference type="PROSITE" id="PS51379">
    <property type="entry name" value="4FE4S_FER_2"/>
    <property type="match status" value="2"/>
</dbReference>
<feature type="initiator methionine" description="Removed" evidence="1">
    <location>
        <position position="1"/>
    </location>
</feature>
<feature type="chain" id="PRO_0000062013" description="Photosystem I iron-sulfur center">
    <location>
        <begin position="2"/>
        <end position="81"/>
    </location>
</feature>
<feature type="domain" description="4Fe-4S ferredoxin-type 1" evidence="2">
    <location>
        <begin position="2"/>
        <end position="31"/>
    </location>
</feature>
<feature type="domain" description="4Fe-4S ferredoxin-type 2" evidence="2">
    <location>
        <begin position="39"/>
        <end position="68"/>
    </location>
</feature>
<feature type="binding site" evidence="2">
    <location>
        <position position="11"/>
    </location>
    <ligand>
        <name>[4Fe-4S] cluster</name>
        <dbReference type="ChEBI" id="CHEBI:49883"/>
        <label>1</label>
    </ligand>
</feature>
<feature type="binding site" evidence="2">
    <location>
        <position position="14"/>
    </location>
    <ligand>
        <name>[4Fe-4S] cluster</name>
        <dbReference type="ChEBI" id="CHEBI:49883"/>
        <label>1</label>
    </ligand>
</feature>
<feature type="binding site" evidence="2">
    <location>
        <position position="17"/>
    </location>
    <ligand>
        <name>[4Fe-4S] cluster</name>
        <dbReference type="ChEBI" id="CHEBI:49883"/>
        <label>1</label>
    </ligand>
</feature>
<feature type="binding site" evidence="2">
    <location>
        <position position="21"/>
    </location>
    <ligand>
        <name>[4Fe-4S] cluster</name>
        <dbReference type="ChEBI" id="CHEBI:49883"/>
        <label>2</label>
    </ligand>
</feature>
<feature type="binding site" evidence="2">
    <location>
        <position position="48"/>
    </location>
    <ligand>
        <name>[4Fe-4S] cluster</name>
        <dbReference type="ChEBI" id="CHEBI:49883"/>
        <label>2</label>
    </ligand>
</feature>
<feature type="binding site" evidence="2">
    <location>
        <position position="51"/>
    </location>
    <ligand>
        <name>[4Fe-4S] cluster</name>
        <dbReference type="ChEBI" id="CHEBI:49883"/>
        <label>2</label>
    </ligand>
</feature>
<feature type="binding site" evidence="2">
    <location>
        <position position="54"/>
    </location>
    <ligand>
        <name>[4Fe-4S] cluster</name>
        <dbReference type="ChEBI" id="CHEBI:49883"/>
        <label>2</label>
    </ligand>
</feature>
<feature type="binding site" evidence="2">
    <location>
        <position position="58"/>
    </location>
    <ligand>
        <name>[4Fe-4S] cluster</name>
        <dbReference type="ChEBI" id="CHEBI:49883"/>
        <label>1</label>
    </ligand>
</feature>
<keyword id="KW-0004">4Fe-4S</keyword>
<keyword id="KW-0249">Electron transport</keyword>
<keyword id="KW-0408">Iron</keyword>
<keyword id="KW-0411">Iron-sulfur</keyword>
<keyword id="KW-0472">Membrane</keyword>
<keyword id="KW-0479">Metal-binding</keyword>
<keyword id="KW-0560">Oxidoreductase</keyword>
<keyword id="KW-0602">Photosynthesis</keyword>
<keyword id="KW-0603">Photosystem I</keyword>
<keyword id="KW-0677">Repeat</keyword>
<keyword id="KW-0793">Thylakoid</keyword>
<keyword id="KW-0813">Transport</keyword>
<sequence length="81" mass="8830">MSHTVKIYDTCIGCTQCVRACPTDVLEMVPWDGCKAAQIASSPRTEDCVGCKRCETACPTDFLSIRVYLGAETTRSMGLAY</sequence>
<evidence type="ECO:0000250" key="1"/>
<evidence type="ECO:0000255" key="2">
    <source>
        <dbReference type="HAMAP-Rule" id="MF_01303"/>
    </source>
</evidence>
<protein>
    <recommendedName>
        <fullName evidence="2">Photosystem I iron-sulfur center</fullName>
        <ecNumber evidence="2">1.97.1.12</ecNumber>
    </recommendedName>
    <alternativeName>
        <fullName evidence="2">9 kDa polypeptide</fullName>
    </alternativeName>
    <alternativeName>
        <fullName evidence="2">PSI-C</fullName>
    </alternativeName>
    <alternativeName>
        <fullName evidence="2">Photosystem I subunit VII</fullName>
    </alternativeName>
    <alternativeName>
        <fullName evidence="2">PsaC</fullName>
    </alternativeName>
</protein>
<gene>
    <name evidence="2" type="primary">psaC</name>
</gene>
<accession>P0A413</accession>
<accession>P23810</accession>
<reference key="1">
    <citation type="book" date="1990" name="Current research in photosynthesis">
        <editorList>
            <person name="Baltscheffsky M."/>
        </editorList>
        <authorList>
            <person name="Bryant D.A."/>
            <person name="Rhiel E."/>
            <person name="de Lorimier R."/>
            <person name="Zhou J."/>
            <person name="Stirewalt V.L."/>
            <person name="Gasparich G.E."/>
            <person name="Dubbs J.M."/>
            <person name="Snyder W."/>
        </authorList>
    </citation>
    <scope>NUCLEOTIDE SEQUENCE [GENOMIC DNA]</scope>
</reference>
<reference key="2">
    <citation type="submission" date="1999-05" db="EMBL/GenBank/DDBJ databases">
        <title>Nucleotide sequence of the psaC gene of Nostoc PCC8009.</title>
        <authorList>
            <person name="Rhiel E."/>
            <person name="Bryant D.A."/>
        </authorList>
    </citation>
    <scope>NUCLEOTIDE SEQUENCE [GENOMIC DNA]</scope>
</reference>
<name>PSAC_NOSS8</name>